<protein>
    <recommendedName>
        <fullName>Phosphoenolpyruvate carboxykinase [GTP], mitochondrial</fullName>
        <shortName>PEPCK-M</shortName>
        <ecNumber evidence="1">4.1.1.32</ecNumber>
    </recommendedName>
</protein>
<feature type="transit peptide" description="Mitochondrion" evidence="5">
    <location>
        <begin position="1"/>
        <end position="33"/>
    </location>
</feature>
<feature type="chain" id="PRO_0000023570" description="Phosphoenolpyruvate carboxykinase [GTP], mitochondrial">
    <location>
        <begin position="34"/>
        <end position="641"/>
    </location>
</feature>
<feature type="binding site" evidence="2 8">
    <location>
        <position position="105"/>
    </location>
    <ligand>
        <name>phosphoenolpyruvate</name>
        <dbReference type="ChEBI" id="CHEBI:58702"/>
    </ligand>
</feature>
<feature type="binding site" evidence="8">
    <location>
        <position position="256"/>
    </location>
    <ligand>
        <name>phosphoenolpyruvate</name>
        <dbReference type="ChEBI" id="CHEBI:58702"/>
    </ligand>
</feature>
<feature type="binding site" evidence="2 6 7 8">
    <location>
        <position position="263"/>
    </location>
    <ligand>
        <name>Mn(2+)</name>
        <dbReference type="ChEBI" id="CHEBI:29035"/>
    </ligand>
</feature>
<feature type="binding site" evidence="2 6 7 8">
    <location>
        <position position="283"/>
    </location>
    <ligand>
        <name>Mn(2+)</name>
        <dbReference type="ChEBI" id="CHEBI:29035"/>
    </ligand>
</feature>
<feature type="binding site" evidence="2 7">
    <location>
        <position position="306"/>
    </location>
    <ligand>
        <name>GDP</name>
        <dbReference type="ChEBI" id="CHEBI:58189"/>
    </ligand>
</feature>
<feature type="binding site" evidence="2 7">
    <location>
        <position position="307"/>
    </location>
    <ligand>
        <name>GDP</name>
        <dbReference type="ChEBI" id="CHEBI:58189"/>
    </ligand>
</feature>
<feature type="binding site" evidence="2 6">
    <location>
        <position position="307"/>
    </location>
    <ligand>
        <name>Mn(2+)</name>
        <dbReference type="ChEBI" id="CHEBI:29035"/>
    </ligand>
</feature>
<feature type="binding site" evidence="2 7">
    <location>
        <position position="308"/>
    </location>
    <ligand>
        <name>GDP</name>
        <dbReference type="ChEBI" id="CHEBI:58189"/>
    </ligand>
</feature>
<feature type="binding site" evidence="2 7">
    <location>
        <position position="309"/>
    </location>
    <ligand>
        <name>GDP</name>
        <dbReference type="ChEBI" id="CHEBI:58189"/>
    </ligand>
</feature>
<feature type="binding site" evidence="2 7">
    <location>
        <position position="310"/>
    </location>
    <ligand>
        <name>GDP</name>
        <dbReference type="ChEBI" id="CHEBI:58189"/>
    </ligand>
</feature>
<feature type="binding site" evidence="2 7">
    <location>
        <position position="311"/>
    </location>
    <ligand>
        <name>GDP</name>
        <dbReference type="ChEBI" id="CHEBI:58189"/>
    </ligand>
</feature>
<feature type="binding site" evidence="2 6 7 8">
    <location>
        <position position="330"/>
    </location>
    <ligand>
        <name>Mn(2+)</name>
        <dbReference type="ChEBI" id="CHEBI:29035"/>
    </ligand>
</feature>
<feature type="binding site" evidence="2 7">
    <location>
        <position position="356"/>
    </location>
    <ligand>
        <name>GDP</name>
        <dbReference type="ChEBI" id="CHEBI:58189"/>
    </ligand>
</feature>
<feature type="binding site" evidence="2 8">
    <location>
        <position position="422"/>
    </location>
    <ligand>
        <name>phosphoenolpyruvate</name>
        <dbReference type="ChEBI" id="CHEBI:58702"/>
    </ligand>
</feature>
<feature type="binding site" evidence="2 8">
    <location>
        <position position="424"/>
    </location>
    <ligand>
        <name>phosphoenolpyruvate</name>
        <dbReference type="ChEBI" id="CHEBI:58702"/>
    </ligand>
</feature>
<feature type="binding site" evidence="2 7">
    <location>
        <position position="455"/>
    </location>
    <ligand>
        <name>GDP</name>
        <dbReference type="ChEBI" id="CHEBI:58189"/>
    </ligand>
</feature>
<feature type="binding site" evidence="2 7">
    <location>
        <position position="535"/>
    </location>
    <ligand>
        <name>GDP</name>
        <dbReference type="ChEBI" id="CHEBI:58189"/>
    </ligand>
</feature>
<feature type="binding site" evidence="2 7">
    <location>
        <position position="544"/>
    </location>
    <ligand>
        <name>GDP</name>
        <dbReference type="ChEBI" id="CHEBI:58189"/>
    </ligand>
</feature>
<feature type="binding site" evidence="2 7">
    <location>
        <position position="549"/>
    </location>
    <ligand>
        <name>GDP</name>
        <dbReference type="ChEBI" id="CHEBI:58189"/>
    </ligand>
</feature>
<feature type="binding site" evidence="2 7">
    <location>
        <position position="552"/>
    </location>
    <ligand>
        <name>GDP</name>
        <dbReference type="ChEBI" id="CHEBI:58189"/>
    </ligand>
</feature>
<feature type="sequence conflict" description="In Ref. 1; AAA49006." evidence="4" ref="1">
    <original>E</original>
    <variation>Q</variation>
    <location>
        <position position="107"/>
    </location>
</feature>
<feature type="sequence conflict" description="In Ref. 1; AAA49006." evidence="4" ref="1">
    <original>GP</original>
    <variation>S</variation>
    <location>
        <begin position="129"/>
        <end position="130"/>
    </location>
</feature>
<feature type="sequence conflict" description="In Ref. 1; AAA49006." evidence="4" ref="1">
    <original>P</original>
    <variation>R</variation>
    <location>
        <position position="235"/>
    </location>
</feature>
<feature type="sequence conflict" description="In Ref. 1; AAA49006." evidence="4" ref="1">
    <original>R</original>
    <variation>A</variation>
    <location>
        <position position="268"/>
    </location>
</feature>
<feature type="sequence conflict" description="In Ref. 1; AAA49006." evidence="4" ref="1">
    <original>E</original>
    <variation>R</variation>
    <location>
        <position position="339"/>
    </location>
</feature>
<feature type="sequence conflict" description="In Ref. 1; AAA49006." evidence="4" ref="1">
    <original>R</original>
    <variation>S</variation>
    <location>
        <position position="502"/>
    </location>
</feature>
<feature type="helix" evidence="9">
    <location>
        <begin position="43"/>
        <end position="56"/>
    </location>
</feature>
<feature type="strand" evidence="9">
    <location>
        <begin position="59"/>
        <end position="63"/>
    </location>
</feature>
<feature type="helix" evidence="9">
    <location>
        <begin position="68"/>
        <end position="80"/>
    </location>
</feature>
<feature type="strand" evidence="9">
    <location>
        <begin position="83"/>
        <end position="86"/>
    </location>
</feature>
<feature type="strand" evidence="9">
    <location>
        <begin position="90"/>
        <end position="92"/>
    </location>
</feature>
<feature type="strand" evidence="9">
    <location>
        <begin position="94"/>
        <end position="96"/>
    </location>
</feature>
<feature type="strand" evidence="10">
    <location>
        <begin position="102"/>
        <end position="104"/>
    </location>
</feature>
<feature type="helix" evidence="9">
    <location>
        <begin position="107"/>
        <end position="109"/>
    </location>
</feature>
<feature type="strand" evidence="9">
    <location>
        <begin position="110"/>
        <end position="113"/>
    </location>
</feature>
<feature type="helix" evidence="9">
    <location>
        <begin position="117"/>
        <end position="119"/>
    </location>
</feature>
<feature type="strand" evidence="10">
    <location>
        <begin position="121"/>
        <end position="123"/>
    </location>
</feature>
<feature type="helix" evidence="9">
    <location>
        <begin position="139"/>
        <end position="149"/>
    </location>
</feature>
<feature type="turn" evidence="9">
    <location>
        <begin position="151"/>
        <end position="156"/>
    </location>
</feature>
<feature type="strand" evidence="9">
    <location>
        <begin position="157"/>
        <end position="167"/>
    </location>
</feature>
<feature type="strand" evidence="10">
    <location>
        <begin position="171"/>
        <end position="173"/>
    </location>
</feature>
<feature type="strand" evidence="9">
    <location>
        <begin position="175"/>
        <end position="182"/>
    </location>
</feature>
<feature type="helix" evidence="9">
    <location>
        <begin position="184"/>
        <end position="193"/>
    </location>
</feature>
<feature type="strand" evidence="9">
    <location>
        <begin position="194"/>
        <end position="197"/>
    </location>
</feature>
<feature type="helix" evidence="9">
    <location>
        <begin position="198"/>
        <end position="201"/>
    </location>
</feature>
<feature type="strand" evidence="9">
    <location>
        <begin position="209"/>
        <end position="214"/>
    </location>
</feature>
<feature type="helix" evidence="9">
    <location>
        <begin position="233"/>
        <end position="235"/>
    </location>
</feature>
<feature type="strand" evidence="9">
    <location>
        <begin position="237"/>
        <end position="241"/>
    </location>
</feature>
<feature type="helix" evidence="9">
    <location>
        <begin position="242"/>
        <end position="244"/>
    </location>
</feature>
<feature type="strand" evidence="9">
    <location>
        <begin position="246"/>
        <end position="251"/>
    </location>
</feature>
<feature type="helix" evidence="9">
    <location>
        <begin position="255"/>
        <end position="258"/>
    </location>
</feature>
<feature type="helix" evidence="9">
    <location>
        <begin position="261"/>
        <end position="267"/>
    </location>
</feature>
<feature type="helix" evidence="9">
    <location>
        <begin position="268"/>
        <end position="277"/>
    </location>
</feature>
<feature type="strand" evidence="9">
    <location>
        <begin position="280"/>
        <end position="283"/>
    </location>
</feature>
<feature type="strand" evidence="9">
    <location>
        <begin position="285"/>
        <end position="290"/>
    </location>
</feature>
<feature type="strand" evidence="9">
    <location>
        <begin position="296"/>
        <end position="302"/>
    </location>
</feature>
<feature type="helix" evidence="9">
    <location>
        <begin position="312"/>
        <end position="314"/>
    </location>
</feature>
<feature type="strand" evidence="9">
    <location>
        <begin position="323"/>
        <end position="330"/>
    </location>
</feature>
<feature type="strand" evidence="9">
    <location>
        <begin position="332"/>
        <end position="336"/>
    </location>
</feature>
<feature type="strand" evidence="9">
    <location>
        <begin position="340"/>
        <end position="345"/>
    </location>
</feature>
<feature type="strand" evidence="9">
    <location>
        <begin position="349"/>
        <end position="354"/>
    </location>
</feature>
<feature type="turn" evidence="9">
    <location>
        <begin position="360"/>
        <end position="362"/>
    </location>
</feature>
<feature type="helix" evidence="9">
    <location>
        <begin position="364"/>
        <end position="369"/>
    </location>
</feature>
<feature type="strand" evidence="9">
    <location>
        <begin position="371"/>
        <end position="373"/>
    </location>
</feature>
<feature type="strand" evidence="9">
    <location>
        <begin position="375"/>
        <end position="378"/>
    </location>
</feature>
<feature type="strand" evidence="9">
    <location>
        <begin position="380"/>
        <end position="382"/>
    </location>
</feature>
<feature type="strand" evidence="9">
    <location>
        <begin position="407"/>
        <end position="410"/>
    </location>
</feature>
<feature type="strand" evidence="9">
    <location>
        <begin position="424"/>
        <end position="428"/>
    </location>
</feature>
<feature type="helix" evidence="9">
    <location>
        <begin position="429"/>
        <end position="431"/>
    </location>
</feature>
<feature type="turn" evidence="9">
    <location>
        <begin position="437"/>
        <end position="440"/>
    </location>
</feature>
<feature type="strand" evidence="9">
    <location>
        <begin position="445"/>
        <end position="454"/>
    </location>
</feature>
<feature type="strand" evidence="9">
    <location>
        <begin position="457"/>
        <end position="460"/>
    </location>
</feature>
<feature type="strand" evidence="9">
    <location>
        <begin position="462"/>
        <end position="465"/>
    </location>
</feature>
<feature type="helix" evidence="9">
    <location>
        <begin position="469"/>
        <end position="477"/>
    </location>
</feature>
<feature type="strand" evidence="10">
    <location>
        <begin position="480"/>
        <end position="482"/>
    </location>
</feature>
<feature type="strand" evidence="10">
    <location>
        <begin position="487"/>
        <end position="489"/>
    </location>
</feature>
<feature type="strand" evidence="10">
    <location>
        <begin position="494"/>
        <end position="496"/>
    </location>
</feature>
<feature type="helix" evidence="9">
    <location>
        <begin position="498"/>
        <end position="500"/>
    </location>
</feature>
<feature type="helix" evidence="9">
    <location>
        <begin position="502"/>
        <end position="504"/>
    </location>
</feature>
<feature type="helix" evidence="9">
    <location>
        <begin position="509"/>
        <end position="519"/>
    </location>
</feature>
<feature type="strand" evidence="9">
    <location>
        <begin position="529"/>
        <end position="535"/>
    </location>
</feature>
<feature type="strand" evidence="9">
    <location>
        <begin position="542"/>
        <end position="546"/>
    </location>
</feature>
<feature type="helix" evidence="9">
    <location>
        <begin position="549"/>
        <end position="551"/>
    </location>
</feature>
<feature type="helix" evidence="9">
    <location>
        <begin position="552"/>
        <end position="563"/>
    </location>
</feature>
<feature type="strand" evidence="9">
    <location>
        <begin position="569"/>
        <end position="572"/>
    </location>
</feature>
<feature type="strand" evidence="9">
    <location>
        <begin position="575"/>
        <end position="578"/>
    </location>
</feature>
<feature type="turn" evidence="11">
    <location>
        <begin position="580"/>
        <end position="582"/>
    </location>
</feature>
<feature type="helix" evidence="9">
    <location>
        <begin position="593"/>
        <end position="596"/>
    </location>
</feature>
<feature type="helix" evidence="9">
    <location>
        <begin position="601"/>
        <end position="618"/>
    </location>
</feature>
<feature type="helix" evidence="9">
    <location>
        <begin position="620"/>
        <end position="622"/>
    </location>
</feature>
<feature type="helix" evidence="9">
    <location>
        <begin position="625"/>
        <end position="639"/>
    </location>
</feature>
<name>PCKGM_CHICK</name>
<gene>
    <name type="primary">PCK2</name>
</gene>
<comment type="function">
    <text evidence="1">Catalyzes the conversion of oxaloacetate (OAA) to phosphoenolpyruvate (PEP), the rate-limiting step in the metabolic pathway that produces glucose from lactate and other precursors derived from the citric acid cycle. Facilitates the recycling of lactate carbon in the liver (By similarity). Can play an active role in glyceroneogenesis and gluconeogenesis (By similarity).</text>
</comment>
<comment type="catalytic activity">
    <reaction evidence="1">
        <text>oxaloacetate + GTP = phosphoenolpyruvate + GDP + CO2</text>
        <dbReference type="Rhea" id="RHEA:10388"/>
        <dbReference type="ChEBI" id="CHEBI:16452"/>
        <dbReference type="ChEBI" id="CHEBI:16526"/>
        <dbReference type="ChEBI" id="CHEBI:37565"/>
        <dbReference type="ChEBI" id="CHEBI:58189"/>
        <dbReference type="ChEBI" id="CHEBI:58702"/>
        <dbReference type="EC" id="4.1.1.32"/>
    </reaction>
    <physiologicalReaction direction="left-to-right" evidence="1">
        <dbReference type="Rhea" id="RHEA:10389"/>
    </physiologicalReaction>
</comment>
<comment type="cofactor">
    <cofactor evidence="2">
        <name>Mn(2+)</name>
        <dbReference type="ChEBI" id="CHEBI:29035"/>
    </cofactor>
    <text evidence="2">Binds 1 Mn(2+) ion per subunit.</text>
</comment>
<comment type="pathway">
    <text evidence="1">Carbohydrate biosynthesis; gluconeogenesis.</text>
</comment>
<comment type="subunit">
    <text evidence="2">Monomer.</text>
</comment>
<comment type="subcellular location">
    <subcellularLocation>
        <location evidence="1">Mitochondrion</location>
    </subcellularLocation>
</comment>
<comment type="tissue specificity">
    <text evidence="3">Present in liver and kidney.</text>
</comment>
<comment type="induction">
    <text>Appears to be constitutively expressed.</text>
</comment>
<comment type="miscellaneous">
    <text>In eukaryotes there are two isozymes: a cytoplasmic one and a mitochondrial one. In birds, PEPCK-M is the sole form of hepatic PEPCK, but it constitutes 60% of the enzyme in the kidney.</text>
</comment>
<comment type="similarity">
    <text evidence="4">Belongs to the phosphoenolpyruvate carboxykinase [GTP] family.</text>
</comment>
<reference key="1">
    <citation type="journal article" date="1990" name="J. Biol. Chem.">
        <title>Mitochondrial phosphoenolpyruvate carboxykinase from the chicken. Comparison of the cDNA and protein sequences with the cytosolic isozyme.</title>
        <authorList>
            <person name="Weldon S.L."/>
            <person name="Rando A."/>
            <person name="Matathias A.S."/>
            <person name="Hod Y."/>
            <person name="Kalonick P.A."/>
            <person name="Savon S."/>
            <person name="Cook J.S."/>
            <person name="Hanson R.W."/>
        </authorList>
    </citation>
    <scope>NUCLEOTIDE SEQUENCE [MRNA]</scope>
    <scope>PARTIAL PROTEIN SEQUENCE</scope>
    <scope>TISSUE SPECIFICITY</scope>
    <source>
        <tissue>Liver</tissue>
    </source>
</reference>
<reference key="2">
    <citation type="journal article" date="2006" name="Biochemistry">
        <title>Structural insights into the mechanism of PEPCK catalysis.</title>
        <authorList>
            <person name="Holyoak T."/>
            <person name="Sullivan S.M."/>
            <person name="Nowak T."/>
        </authorList>
    </citation>
    <scope>X-RAY CRYSTALLOGRAPHY (1.7 ANGSTROMS) OF 34-641 IN COMPLEX WITH MN(2+); GTP AND PHOSPHOENOLPYRUVATE</scope>
    <scope>SEQUENCE REVISION</scope>
    <scope>COFACTOR</scope>
    <scope>SUBUNIT</scope>
</reference>
<organism>
    <name type="scientific">Gallus gallus</name>
    <name type="common">Chicken</name>
    <dbReference type="NCBI Taxonomy" id="9031"/>
    <lineage>
        <taxon>Eukaryota</taxon>
        <taxon>Metazoa</taxon>
        <taxon>Chordata</taxon>
        <taxon>Craniata</taxon>
        <taxon>Vertebrata</taxon>
        <taxon>Euteleostomi</taxon>
        <taxon>Archelosauria</taxon>
        <taxon>Archosauria</taxon>
        <taxon>Dinosauria</taxon>
        <taxon>Saurischia</taxon>
        <taxon>Theropoda</taxon>
        <taxon>Coelurosauria</taxon>
        <taxon>Aves</taxon>
        <taxon>Neognathae</taxon>
        <taxon>Galloanserae</taxon>
        <taxon>Galliformes</taxon>
        <taxon>Phasianidae</taxon>
        <taxon>Phasianinae</taxon>
        <taxon>Gallus</taxon>
    </lineage>
</organism>
<accession>P21642</accession>
<evidence type="ECO:0000250" key="1">
    <source>
        <dbReference type="UniProtKB" id="Q16822"/>
    </source>
</evidence>
<evidence type="ECO:0000269" key="2">
    <source>
    </source>
</evidence>
<evidence type="ECO:0000269" key="3">
    <source>
    </source>
</evidence>
<evidence type="ECO:0000305" key="4"/>
<evidence type="ECO:0000305" key="5">
    <source>
    </source>
</evidence>
<evidence type="ECO:0007744" key="6">
    <source>
        <dbReference type="PDB" id="2FAF"/>
    </source>
</evidence>
<evidence type="ECO:0007744" key="7">
    <source>
        <dbReference type="PDB" id="2FAH"/>
    </source>
</evidence>
<evidence type="ECO:0007744" key="8">
    <source>
        <dbReference type="PDB" id="2QZY"/>
    </source>
</evidence>
<evidence type="ECO:0007829" key="9">
    <source>
        <dbReference type="PDB" id="2FAF"/>
    </source>
</evidence>
<evidence type="ECO:0007829" key="10">
    <source>
        <dbReference type="PDB" id="2FAH"/>
    </source>
</evidence>
<evidence type="ECO:0007829" key="11">
    <source>
        <dbReference type="PDB" id="2QZY"/>
    </source>
</evidence>
<dbReference type="EC" id="4.1.1.32" evidence="1"/>
<dbReference type="EMBL" id="J05419">
    <property type="protein sequence ID" value="AAA49006.1"/>
    <property type="molecule type" value="mRNA"/>
</dbReference>
<dbReference type="PIR" id="A35191">
    <property type="entry name" value="QYCHGM"/>
</dbReference>
<dbReference type="RefSeq" id="NP_990801.1">
    <property type="nucleotide sequence ID" value="NM_205470.1"/>
</dbReference>
<dbReference type="PDB" id="2FAF">
    <property type="method" value="X-ray"/>
    <property type="resolution" value="1.70 A"/>
    <property type="chains" value="A/B=34-641"/>
</dbReference>
<dbReference type="PDB" id="2FAH">
    <property type="method" value="X-ray"/>
    <property type="resolution" value="2.09 A"/>
    <property type="chains" value="A/B/C/D=34-128, A/B/C/D=130-641"/>
</dbReference>
<dbReference type="PDB" id="2QZY">
    <property type="method" value="X-ray"/>
    <property type="resolution" value="1.90 A"/>
    <property type="chains" value="A/B=34-641"/>
</dbReference>
<dbReference type="PDBsum" id="2FAF"/>
<dbReference type="PDBsum" id="2FAH"/>
<dbReference type="PDBsum" id="2QZY"/>
<dbReference type="SMR" id="P21642"/>
<dbReference type="FunCoup" id="P21642">
    <property type="interactions" value="76"/>
</dbReference>
<dbReference type="STRING" id="9031.ENSGALP00000071013"/>
<dbReference type="PaxDb" id="9031-ENSGALP00000015626"/>
<dbReference type="GeneID" id="396457"/>
<dbReference type="KEGG" id="gga:396457"/>
<dbReference type="CTD" id="5106"/>
<dbReference type="VEuPathDB" id="HostDB:geneid_396457"/>
<dbReference type="eggNOG" id="KOG3749">
    <property type="taxonomic scope" value="Eukaryota"/>
</dbReference>
<dbReference type="InParanoid" id="P21642"/>
<dbReference type="OrthoDB" id="5841594at2759"/>
<dbReference type="PhylomeDB" id="P21642"/>
<dbReference type="BRENDA" id="4.1.1.32">
    <property type="organism ID" value="1306"/>
</dbReference>
<dbReference type="Reactome" id="R-GGA-352875">
    <property type="pathway name" value="Gluconeogenesis"/>
</dbReference>
<dbReference type="SABIO-RK" id="P21642"/>
<dbReference type="UniPathway" id="UPA00138"/>
<dbReference type="EvolutionaryTrace" id="P21642"/>
<dbReference type="PRO" id="PR:P21642"/>
<dbReference type="Proteomes" id="UP000000539">
    <property type="component" value="Unassembled WGS sequence"/>
</dbReference>
<dbReference type="GO" id="GO:0005759">
    <property type="term" value="C:mitochondrial matrix"/>
    <property type="evidence" value="ECO:0000318"/>
    <property type="project" value="GO_Central"/>
</dbReference>
<dbReference type="GO" id="GO:0005739">
    <property type="term" value="C:mitochondrion"/>
    <property type="evidence" value="ECO:0000318"/>
    <property type="project" value="GO_Central"/>
</dbReference>
<dbReference type="GO" id="GO:0005525">
    <property type="term" value="F:GTP binding"/>
    <property type="evidence" value="ECO:0007669"/>
    <property type="project" value="UniProtKB-KW"/>
</dbReference>
<dbReference type="GO" id="GO:0030145">
    <property type="term" value="F:manganese ion binding"/>
    <property type="evidence" value="ECO:0000318"/>
    <property type="project" value="GO_Central"/>
</dbReference>
<dbReference type="GO" id="GO:0004613">
    <property type="term" value="F:phosphoenolpyruvate carboxykinase (GTP) activity"/>
    <property type="evidence" value="ECO:0000250"/>
    <property type="project" value="UniProtKB"/>
</dbReference>
<dbReference type="GO" id="GO:0071549">
    <property type="term" value="P:cellular response to dexamethasone stimulus"/>
    <property type="evidence" value="ECO:0000270"/>
    <property type="project" value="AgBase"/>
</dbReference>
<dbReference type="GO" id="GO:0071361">
    <property type="term" value="P:cellular response to ethanol"/>
    <property type="evidence" value="ECO:0000314"/>
    <property type="project" value="AgBase"/>
</dbReference>
<dbReference type="GO" id="GO:0071333">
    <property type="term" value="P:cellular response to glucose stimulus"/>
    <property type="evidence" value="ECO:0000318"/>
    <property type="project" value="GO_Central"/>
</dbReference>
<dbReference type="GO" id="GO:0032869">
    <property type="term" value="P:cellular response to insulin stimulus"/>
    <property type="evidence" value="ECO:0000270"/>
    <property type="project" value="AgBase"/>
</dbReference>
<dbReference type="GO" id="GO:0018991">
    <property type="term" value="P:egg-laying behavior"/>
    <property type="evidence" value="ECO:0000304"/>
    <property type="project" value="AgBase"/>
</dbReference>
<dbReference type="GO" id="GO:0030703">
    <property type="term" value="P:eggshell formation"/>
    <property type="evidence" value="ECO:0000315"/>
    <property type="project" value="AgBase"/>
</dbReference>
<dbReference type="GO" id="GO:0009792">
    <property type="term" value="P:embryo development ending in birth or egg hatching"/>
    <property type="evidence" value="ECO:0000315"/>
    <property type="project" value="AgBase"/>
</dbReference>
<dbReference type="GO" id="GO:0048562">
    <property type="term" value="P:embryonic organ morphogenesis"/>
    <property type="evidence" value="ECO:0000270"/>
    <property type="project" value="AgBase"/>
</dbReference>
<dbReference type="GO" id="GO:0006094">
    <property type="term" value="P:gluconeogenesis"/>
    <property type="evidence" value="ECO:0000318"/>
    <property type="project" value="GO_Central"/>
</dbReference>
<dbReference type="GO" id="GO:0019661">
    <property type="term" value="P:glucose catabolic process to lactate via pyruvate"/>
    <property type="evidence" value="ECO:0000304"/>
    <property type="project" value="AgBase"/>
</dbReference>
<dbReference type="GO" id="GO:0046327">
    <property type="term" value="P:glycerol biosynthetic process from pyruvate"/>
    <property type="evidence" value="ECO:0000318"/>
    <property type="project" value="GO_Central"/>
</dbReference>
<dbReference type="GO" id="GO:0019563">
    <property type="term" value="P:glycerol catabolic process"/>
    <property type="evidence" value="ECO:0000314"/>
    <property type="project" value="AgBase"/>
</dbReference>
<dbReference type="GO" id="GO:0070365">
    <property type="term" value="P:hepatocyte differentiation"/>
    <property type="evidence" value="ECO:0000270"/>
    <property type="project" value="AgBase"/>
</dbReference>
<dbReference type="GO" id="GO:0006089">
    <property type="term" value="P:lactate metabolic process"/>
    <property type="evidence" value="ECO:0000314"/>
    <property type="project" value="AgBase"/>
</dbReference>
<dbReference type="GO" id="GO:0006107">
    <property type="term" value="P:oxaloacetate metabolic process"/>
    <property type="evidence" value="ECO:0000318"/>
    <property type="project" value="GO_Central"/>
</dbReference>
<dbReference type="GO" id="GO:0019543">
    <property type="term" value="P:propionate catabolic process"/>
    <property type="evidence" value="ECO:0000314"/>
    <property type="project" value="AgBase"/>
</dbReference>
<dbReference type="GO" id="GO:0006090">
    <property type="term" value="P:pyruvate metabolic process"/>
    <property type="evidence" value="ECO:0000314"/>
    <property type="project" value="AgBase"/>
</dbReference>
<dbReference type="GO" id="GO:0006111">
    <property type="term" value="P:regulation of gluconeogenesis"/>
    <property type="evidence" value="ECO:0000304"/>
    <property type="project" value="AgBase"/>
</dbReference>
<dbReference type="GO" id="GO:0050792">
    <property type="term" value="P:regulation of viral process"/>
    <property type="evidence" value="ECO:0000316"/>
    <property type="project" value="AgBase"/>
</dbReference>
<dbReference type="GO" id="GO:0051591">
    <property type="term" value="P:response to cAMP"/>
    <property type="evidence" value="ECO:0000314"/>
    <property type="project" value="AgBase"/>
</dbReference>
<dbReference type="GO" id="GO:0042594">
    <property type="term" value="P:response to starvation"/>
    <property type="evidence" value="ECO:0000314"/>
    <property type="project" value="AgBase"/>
</dbReference>
<dbReference type="GO" id="GO:0007296">
    <property type="term" value="P:vitellogenesis"/>
    <property type="evidence" value="ECO:0000315"/>
    <property type="project" value="AgBase"/>
</dbReference>
<dbReference type="CDD" id="cd00819">
    <property type="entry name" value="PEPCK_GTP"/>
    <property type="match status" value="1"/>
</dbReference>
<dbReference type="FunFam" id="3.90.228.20:FF:000005">
    <property type="entry name" value="Phosphoenolpyruvate carboxykinase [GTP], mitochondrial"/>
    <property type="match status" value="1"/>
</dbReference>
<dbReference type="FunFam" id="3.40.449.10:FF:000003">
    <property type="entry name" value="Phosphoenolpyruvate carboxykinase, cytosolic [GTP]"/>
    <property type="match status" value="1"/>
</dbReference>
<dbReference type="Gene3D" id="3.90.228.20">
    <property type="match status" value="1"/>
</dbReference>
<dbReference type="Gene3D" id="3.40.449.10">
    <property type="entry name" value="Phosphoenolpyruvate Carboxykinase, domain 1"/>
    <property type="match status" value="1"/>
</dbReference>
<dbReference type="Gene3D" id="2.170.8.10">
    <property type="entry name" value="Phosphoenolpyruvate Carboxykinase, domain 2"/>
    <property type="match status" value="1"/>
</dbReference>
<dbReference type="HAMAP" id="MF_00452">
    <property type="entry name" value="PEPCK_GTP"/>
    <property type="match status" value="1"/>
</dbReference>
<dbReference type="InterPro" id="IPR018091">
    <property type="entry name" value="PEP_carboxykin_GTP_CS"/>
</dbReference>
<dbReference type="InterPro" id="IPR013035">
    <property type="entry name" value="PEP_carboxykinase_C"/>
</dbReference>
<dbReference type="InterPro" id="IPR008209">
    <property type="entry name" value="PEP_carboxykinase_GTP"/>
</dbReference>
<dbReference type="InterPro" id="IPR035077">
    <property type="entry name" value="PEP_carboxykinase_GTP_C"/>
</dbReference>
<dbReference type="InterPro" id="IPR035078">
    <property type="entry name" value="PEP_carboxykinase_GTP_N"/>
</dbReference>
<dbReference type="InterPro" id="IPR008210">
    <property type="entry name" value="PEP_carboxykinase_N"/>
</dbReference>
<dbReference type="NCBIfam" id="NF003253">
    <property type="entry name" value="PRK04210.1"/>
    <property type="match status" value="1"/>
</dbReference>
<dbReference type="PANTHER" id="PTHR11561">
    <property type="entry name" value="PHOSPHOENOLPYRUVATE CARBOXYKINASE"/>
    <property type="match status" value="1"/>
</dbReference>
<dbReference type="PANTHER" id="PTHR11561:SF11">
    <property type="entry name" value="PHOSPHOENOLPYRUVATE CARBOXYKINASE [GTP], MITOCHONDRIAL"/>
    <property type="match status" value="1"/>
</dbReference>
<dbReference type="Pfam" id="PF00821">
    <property type="entry name" value="PEPCK_GTP"/>
    <property type="match status" value="1"/>
</dbReference>
<dbReference type="Pfam" id="PF17297">
    <property type="entry name" value="PEPCK_N"/>
    <property type="match status" value="1"/>
</dbReference>
<dbReference type="PIRSF" id="PIRSF001348">
    <property type="entry name" value="PEP_carboxykinase_GTP"/>
    <property type="match status" value="1"/>
</dbReference>
<dbReference type="SUPFAM" id="SSF68923">
    <property type="entry name" value="PEP carboxykinase N-terminal domain"/>
    <property type="match status" value="1"/>
</dbReference>
<dbReference type="SUPFAM" id="SSF53795">
    <property type="entry name" value="PEP carboxykinase-like"/>
    <property type="match status" value="1"/>
</dbReference>
<dbReference type="PROSITE" id="PS00505">
    <property type="entry name" value="PEPCK_GTP"/>
    <property type="match status" value="1"/>
</dbReference>
<proteinExistence type="evidence at protein level"/>
<sequence>MFWLRGGAQSCRGGETEDRMQRGMWGVGLARRRLSTSLSALPAAARDFVEEAVRLCRPREVLLCDGSEEEGKELLRGLQDDGVLHPLPKYDNCWLARTDPRDVARVESKTVLVTPEQSDAVPPPPPSGGPPQLGNWMSPNAFQAAVQERFPGCMAGRPLYVIPFSMGPPTSPLAKLGVQVTDSPYVVLSMRIMTRVGPAVLQRLDDDFVRCLHSVGRPLPLTEPLVSSWPCDRSPVLVAHIPSERRIVSFGSGYGGNSLLGKKCFALRIASRMAQQQGWLAEHMLILGVTSPSGEKRYMAAAFPSACGKTNLAMMTPSLPGWRIHCVGDDIAWMKFDDEGRLRAINPERGFFGVAPGTSSRTNPNAMATIARNTIFTNVGLRSDGGVYWDGLDEPTEPGVTYTSWLGKPWKHGDPEPCAHPNSRFCAPADQCPIMDPRWDDPEGVPIDAIIFGGRRPRGVPLVVEAFGWRHGVFMGSAMRSEATAAAEHKGGRLMHDPFAMRPFFGYNAGRYLEHWLSTGLRSNARLPRLFHVNWFLRDNEGRFVWPGFGHNARVLAWIFGRIQGRDTARPTPIGWVPKEGDLDLGGLPGVDYSQLFPMEKGFWEEECRQLREYYGENFGADLPRDVMAELEGLEERVRKM</sequence>
<keyword id="KW-0002">3D-structure</keyword>
<keyword id="KW-0210">Decarboxylase</keyword>
<keyword id="KW-0903">Direct protein sequencing</keyword>
<keyword id="KW-0312">Gluconeogenesis</keyword>
<keyword id="KW-0342">GTP-binding</keyword>
<keyword id="KW-0456">Lyase</keyword>
<keyword id="KW-0464">Manganese</keyword>
<keyword id="KW-0479">Metal-binding</keyword>
<keyword id="KW-0496">Mitochondrion</keyword>
<keyword id="KW-0547">Nucleotide-binding</keyword>
<keyword id="KW-1185">Reference proteome</keyword>
<keyword id="KW-0809">Transit peptide</keyword>